<comment type="function">
    <text>ELH acts as a neurotransmitter locally, upon neurons of the abdominal ganglion and as a hormone by diffusing into the circulating hemolymph and modulating the activity of other organs. It specifically causes contraction of smooth muscle in the ovotestis and expulsion of the egg string.</text>
</comment>
<comment type="function">
    <text>Alpha-BCP decreases the activity of a cluster of neurons in the left upper quadrant of the abdominal ganglion.</text>
</comment>
<comment type="function">
    <text>Beta-BCP specifically excites 2 neurons, L1 and R1, in the abdominal ganglion.</text>
</comment>
<comment type="subcellular location">
    <subcellularLocation>
        <location>Secreted</location>
    </subcellularLocation>
</comment>
<comment type="alternative products">
    <event type="alternative splicing"/>
    <isoform>
        <id>P01362-1</id>
        <name>1</name>
        <sequence type="displayed"/>
    </isoform>
    <isoform>
        <id>P01362-2</id>
        <name>2</name>
        <sequence type="described" ref="VSP_025432 VSP_025433"/>
    </isoform>
</comment>
<comment type="tissue specificity">
    <text>Bag cell neurons.</text>
</comment>
<comment type="mass spectrometry">
    <molecule>Beta-bag cell peptide</molecule>
</comment>
<comment type="mass spectrometry">
    <molecule>Gamma-bag cell peptide</molecule>
</comment>
<comment type="mass spectrometry">
    <molecule>Gamma-delta-bag cell peptide</molecule>
</comment>
<comment type="mass spectrometry">
    <molecule>Delta-bag cell peptide(1-36)</molecule>
</comment>
<comment type="mass spectrometry">
    <molecule>Delta-bag cell peptide</molecule>
</comment>
<comment type="mass spectrometry">
    <molecule>Alpha-bag cell peptide(1-7)</molecule>
</comment>
<comment type="mass spectrometry">
    <molecule>Alpha-bag cell peptide(1-8)</molecule>
</comment>
<comment type="mass spectrometry">
    <molecule>Alpha-bag cell peptide</molecule>
</comment>
<comment type="mass spectrometry">
    <molecule>Epsilon-bag cell peptide</molecule>
</comment>
<comment type="mass spectrometry">
    <molecule>Epsilon-bag cell peptide(4-19)</molecule>
</comment>
<comment type="mass spectrometry">
    <molecule>Egg-laying hormone(1-14)</molecule>
</comment>
<comment type="mass spectrometry">
    <molecule>Egg-laying hormone(1-29)</molecule>
</comment>
<comment type="mass spectrometry">
    <molecule>Egg-laying hormone(15-36)</molecule>
</comment>
<comment type="mass spectrometry">
    <molecule>Egg-laying hormone(30-36)</molecule>
</comment>
<comment type="mass spectrometry">
    <molecule>Acidic peptide(1-20)</molecule>
</comment>
<comment type="mass spectrometry">
    <molecule>Acidic peptide</molecule>
</comment>
<comment type="mass spectrometry">
    <molecule>Acidic peptide(9-20)</molecule>
</comment>
<comment type="mass spectrometry">
    <molecule>Acidic peptide(9-26)</molecule>
</comment>
<comment type="mass spectrometry">
    <molecule>Acidic peptide(9-27)</molecule>
</comment>
<comment type="mass spectrometry">
    <molecule>Acidic peptide(8-27)</molecule>
</comment>
<comment type="mass spectrometry">
    <molecule>Acidic peptide(7-27)</molecule>
</comment>
<comment type="mass spectrometry">
    <molecule>Egg-laying hormone</molecule>
</comment>
<comment type="similarity">
    <text evidence="5">Belongs to the molluscan ELH family.</text>
</comment>
<reference key="1">
    <citation type="journal article" date="1983" name="Cell">
        <title>A single gene encodes multiple neuropeptides mediating a stereotyped behavior.</title>
        <authorList>
            <person name="Scheller R.H."/>
            <person name="Jackson J.F."/>
            <person name="McAllister L.B."/>
            <person name="Rothman B.S."/>
            <person name="Mayeri E."/>
            <person name="Axel R."/>
        </authorList>
    </citation>
    <scope>NUCLEOTIDE SEQUENCE (ISOFORM 1)</scope>
</reference>
<reference key="2">
    <citation type="journal article" date="1985" name="J. Neurosci.">
        <title>Structure and expression of the egg-laying hormone gene family in Aplysia.</title>
        <authorList>
            <person name="Mahon A.C."/>
            <person name="Nambu J.R."/>
            <person name="Taussig R."/>
            <person name="Shyamala M."/>
            <person name="Roach A."/>
            <person name="Scheller R.H."/>
        </authorList>
    </citation>
    <scope>NUCLEOTIDE SEQUENCE [GENOMIC DNA / MRNA] (ISOFORMS 1 AND 2)</scope>
    <scope>VARIANTS MET-26; ALA-43; TYR-62; GLU-63; GLN-64; LEU-75; ILE-119; GLU-140; ALA-143; GLU-165 AND PRO-236</scope>
    <source>
        <tissue>Abdominal ganglion</tissue>
        <tissue>Atrial gland</tissue>
    </source>
</reference>
<reference key="3">
    <citation type="journal article" date="1986" name="Brain Res.">
        <title>Expression of the egg-laying hormone gene family in the head ganglia of Aplysia.</title>
        <authorList>
            <person name="Shyamala M."/>
            <person name="Nambu J.R."/>
            <person name="Scheller R.H."/>
        </authorList>
    </citation>
    <scope>NUCLEOTIDE SEQUENCE [MRNA] (ISOFORM 1)</scope>
    <source>
        <tissue>Ring ganglion</tissue>
    </source>
</reference>
<reference key="4">
    <citation type="journal article" date="1983" name="Proc. Natl. Acad. Sci. U.S.A.">
        <title>Primary structure and neuronal effects of alpha-bag cell peptide, a second candidate neurotransmitter encoded by a single gene in bag cell neurons of Aplysia.</title>
        <authorList>
            <person name="Rothman B.S."/>
            <person name="Mayeri E."/>
            <person name="Brown R.O."/>
            <person name="Yuan P.-M."/>
            <person name="Shively J.E."/>
        </authorList>
    </citation>
    <scope>PROTEIN SEQUENCE OF 150-158</scope>
</reference>
<reference key="5">
    <citation type="journal article" date="1979" name="Proc. Natl. Acad. Sci. U.S.A.">
        <title>Purification and primary structure of the neuropeptide egg-laying hormone of Aplysia californica.</title>
        <authorList>
            <person name="Chiu A.Y."/>
            <person name="Hunkapiller M.W."/>
            <person name="Heller E."/>
            <person name="Stuart D.K."/>
            <person name="Hood L.E."/>
            <person name="Strumwasser F."/>
        </authorList>
    </citation>
    <scope>PROTEIN SEQUENCE OF 206-241</scope>
    <source>
        <tissue>Bag cell</tissue>
    </source>
</reference>
<reference key="6">
    <citation type="journal article" date="1987" name="J. Neurosci.">
        <title>Proteolytic processing of the Aplysia egg-laying hormone and R3-14 neuropeptide precursors.</title>
        <authorList>
            <person name="Newcomb R."/>
            <person name="Scheller R.H."/>
        </authorList>
    </citation>
    <scope>PROTEOLYTIC PROCESSING</scope>
</reference>
<reference key="7">
    <citation type="journal article" date="1998" name="Proc. Natl. Acad. Sci. U.S.A.">
        <title>Proteolytic processing of the Aplysia egg-laying hormone prohormone.</title>
        <authorList>
            <person name="Garden R.W."/>
            <person name="Shippy S.A."/>
            <person name="Li L."/>
            <person name="Moroz T.P."/>
            <person name="Sweedler J.V."/>
        </authorList>
    </citation>
    <scope>PROTEOLYTIC PROCESSING</scope>
    <scope>AMIDATION AT LYS-241</scope>
    <scope>MASS SPECTROMETRY</scope>
</reference>
<accession>P01362</accession>
<accession>Q24868</accession>
<accession>Q99261</accession>
<accession>Q99264</accession>
<accession>Q99265</accession>
<accession>Q99266</accession>
<accession>Q99267</accession>
<organism>
    <name type="scientific">Aplysia californica</name>
    <name type="common">California sea hare</name>
    <dbReference type="NCBI Taxonomy" id="6500"/>
    <lineage>
        <taxon>Eukaryota</taxon>
        <taxon>Metazoa</taxon>
        <taxon>Spiralia</taxon>
        <taxon>Lophotrochozoa</taxon>
        <taxon>Mollusca</taxon>
        <taxon>Gastropoda</taxon>
        <taxon>Heterobranchia</taxon>
        <taxon>Euthyneura</taxon>
        <taxon>Tectipleura</taxon>
        <taxon>Aplysiida</taxon>
        <taxon>Aplysioidea</taxon>
        <taxon>Aplysiidae</taxon>
        <taxon>Aplysia</taxon>
    </lineage>
</organism>
<protein>
    <recommendedName>
        <fullName>ELH</fullName>
    </recommendedName>
    <component>
        <recommendedName>
            <fullName>Beta-bag cell peptide</fullName>
            <shortName>Beta-BCP</shortName>
        </recommendedName>
    </component>
    <component>
        <recommendedName>
            <fullName>Gamma-delta-bag cell peptide</fullName>
        </recommendedName>
    </component>
    <component>
        <recommendedName>
            <fullName>Gamma-bag cell peptide</fullName>
            <shortName>Gamma-BCP</shortName>
        </recommendedName>
    </component>
    <component>
        <recommendedName>
            <fullName>Delta-bag cell peptide</fullName>
        </recommendedName>
    </component>
    <component>
        <recommendedName>
            <fullName>Delta-bag cell peptide(1-36)</fullName>
        </recommendedName>
    </component>
    <component>
        <recommendedName>
            <fullName>Alpha-bag cell peptide</fullName>
            <shortName>Alpha-BCP</shortName>
        </recommendedName>
    </component>
    <component>
        <recommendedName>
            <fullName>Alpha-bag cell peptide(1-8)</fullName>
        </recommendedName>
    </component>
    <component>
        <recommendedName>
            <fullName>Alpha-bag cell peptide(1-7)</fullName>
        </recommendedName>
    </component>
    <component>
        <recommendedName>
            <fullName>Epsilon-bag cell peptide</fullName>
        </recommendedName>
    </component>
    <component>
        <recommendedName>
            <fullName>Epsilon-bag cell peptide(4-19)</fullName>
        </recommendedName>
    </component>
    <component>
        <recommendedName>
            <fullName>Egg-laying hormone</fullName>
            <shortName>ELH</shortName>
        </recommendedName>
    </component>
    <component>
        <recommendedName>
            <fullName>Egg-laying hormone(1-29)</fullName>
        </recommendedName>
    </component>
    <component>
        <recommendedName>
            <fullName>Egg-laying hormone(1-14)</fullName>
        </recommendedName>
    </component>
    <component>
        <recommendedName>
            <fullName>Egg-laying hormone(15-36)</fullName>
        </recommendedName>
    </component>
    <component>
        <recommendedName>
            <fullName>Egg-laying hormone(30-36)</fullName>
        </recommendedName>
    </component>
    <component>
        <recommendedName>
            <fullName>Acidic peptide</fullName>
        </recommendedName>
    </component>
    <component>
        <recommendedName>
            <fullName>Acidic peptide(1-20)</fullName>
        </recommendedName>
    </component>
    <component>
        <recommendedName>
            <fullName>Acidic peptide(7-27)</fullName>
        </recommendedName>
    </component>
    <component>
        <recommendedName>
            <fullName>Acidic peptide(8-27)</fullName>
        </recommendedName>
    </component>
    <component>
        <recommendedName>
            <fullName>Acidic peptide(9-27)</fullName>
        </recommendedName>
    </component>
    <component>
        <recommendedName>
            <fullName>Acidic peptide(9-26)</fullName>
        </recommendedName>
    </component>
    <component>
        <recommendedName>
            <fullName>Acidic peptide(9-20)</fullName>
        </recommendedName>
    </component>
</protein>
<sequence>MKRPNNRPTNTMSLILCLTLSSLCVSSQSASVHGKNFATNRAVKSSSPFVVLSPDDNVVSMSGENGYRSALREAFDKSSRDYDDNGEDVFSNEKRRLRFHKRRLRFDRRDQDEGNFRRFPTNAVSMSADENSPFDLSNEDGAVYQRDLRAPRLRFYSLRKRAAGGMEQSEGQNPETESHSRRKRSVLTPSLSSLGESLESGISKRISINQDLKAITDMLLTEQIRERQRYLADLRQRLLEKGKRSSGVSLLTSNKDEEQRELLKAISNLLD</sequence>
<evidence type="ECO:0000256" key="1">
    <source>
        <dbReference type="SAM" id="MobiDB-lite"/>
    </source>
</evidence>
<evidence type="ECO:0000269" key="2">
    <source>
    </source>
</evidence>
<evidence type="ECO:0000269" key="3">
    <source>
    </source>
</evidence>
<evidence type="ECO:0000303" key="4">
    <source>
    </source>
</evidence>
<evidence type="ECO:0000305" key="5"/>
<name>ELH1_APLCA</name>
<feature type="signal peptide">
    <location>
        <begin position="1"/>
        <end position="28"/>
    </location>
</feature>
<feature type="propeptide" id="PRO_0000001813">
    <location>
        <begin position="29"/>
        <end position="95"/>
    </location>
</feature>
<feature type="peptide" id="PRO_0000001814" description="Beta-bag cell peptide">
    <location>
        <begin position="96"/>
        <end position="100"/>
    </location>
</feature>
<feature type="peptide" id="PRO_0000287290" description="Gamma-delta-bag cell peptide">
    <location>
        <begin position="103"/>
        <end position="148"/>
    </location>
</feature>
<feature type="peptide" id="PRO_0000001815" description="Gamma-bag cell peptide">
    <location>
        <begin position="103"/>
        <end position="107"/>
    </location>
</feature>
<feature type="peptide" id="PRO_0000001816" description="Delta-bag cell peptide">
    <location>
        <begin position="110"/>
        <end position="148"/>
    </location>
</feature>
<feature type="peptide" id="PRO_0000287291" description="Delta-bag cell peptide(1-36)">
    <location>
        <begin position="110"/>
        <end position="145"/>
    </location>
</feature>
<feature type="peptide" id="PRO_0000001817" description="Alpha-bag cell peptide">
    <location>
        <begin position="150"/>
        <end position="158"/>
    </location>
</feature>
<feature type="peptide" id="PRO_0000287292" description="Alpha-bag cell peptide(1-8)">
    <location>
        <begin position="150"/>
        <end position="157"/>
    </location>
</feature>
<feature type="peptide" id="PRO_0000287293" description="Alpha-bag cell peptide(1-7)">
    <location>
        <begin position="150"/>
        <end position="156"/>
    </location>
</feature>
<feature type="propeptide" id="PRO_0000001818">
    <location>
        <begin position="162"/>
        <end position="184"/>
    </location>
</feature>
<feature type="peptide" id="PRO_0000287294" description="Epsilon-bag cell peptide">
    <location>
        <begin position="185"/>
        <end position="203"/>
    </location>
</feature>
<feature type="peptide" id="PRO_0000287295" description="Epsilon-bag cell peptide(4-19)">
    <location>
        <begin position="188"/>
        <end position="203"/>
    </location>
</feature>
<feature type="peptide" id="PRO_0000001819" description="Egg-laying hormone">
    <location>
        <begin position="206"/>
        <end position="241"/>
    </location>
</feature>
<feature type="peptide" id="PRO_0000287296" description="Egg-laying hormone(1-29)">
    <location>
        <begin position="206"/>
        <end position="234"/>
    </location>
</feature>
<feature type="peptide" id="PRO_0000287297" description="Egg-laying hormone(1-14)">
    <location>
        <begin position="206"/>
        <end position="219"/>
    </location>
</feature>
<feature type="peptide" id="PRO_0000287298" description="Egg-laying hormone(15-36)">
    <location>
        <begin position="220"/>
        <end position="241"/>
    </location>
</feature>
<feature type="peptide" id="PRO_0000287299" description="Egg-laying hormone(30-36)">
    <location>
        <begin position="235"/>
        <end position="241"/>
    </location>
</feature>
<feature type="peptide" id="PRO_0000001820" description="Acidic peptide">
    <location>
        <begin position="245"/>
        <end position="271"/>
    </location>
</feature>
<feature type="peptide" id="PRO_0000287300" description="Acidic peptide(1-20)">
    <location>
        <begin position="245"/>
        <end position="265"/>
    </location>
</feature>
<feature type="peptide" id="PRO_0000287301" description="Acidic peptide(7-27)">
    <location>
        <begin position="251"/>
        <end position="271"/>
    </location>
</feature>
<feature type="peptide" id="PRO_0000287302" description="Acidic peptide(8-27)">
    <location>
        <begin position="252"/>
        <end position="271"/>
    </location>
</feature>
<feature type="peptide" id="PRO_0000287303" description="Acidic peptide(9-27)">
    <location>
        <begin position="253"/>
        <end position="271"/>
    </location>
</feature>
<feature type="peptide" id="PRO_0000287304" description="Acidic peptide(9-26)">
    <location>
        <begin position="253"/>
        <end position="270"/>
    </location>
</feature>
<feature type="peptide" id="PRO_0000287305" description="Acidic peptide(9-20)">
    <location>
        <begin position="253"/>
        <end position="265"/>
    </location>
</feature>
<feature type="region of interest" description="Disordered" evidence="1">
    <location>
        <begin position="162"/>
        <end position="190"/>
    </location>
</feature>
<feature type="modified residue" description="Lysine amide" evidence="3">
    <location>
        <position position="241"/>
    </location>
</feature>
<feature type="splice variant" id="VSP_025432" description="In isoform 2." evidence="4">
    <location>
        <begin position="23"/>
        <end position="83"/>
    </location>
</feature>
<feature type="splice variant" id="VSP_025433" description="In isoform 2." evidence="4">
    <original>D</original>
    <variation>H</variation>
    <location>
        <position position="84"/>
    </location>
</feature>
<feature type="sequence variant" evidence="2">
    <original>S</original>
    <variation>M</variation>
    <location>
        <position position="26"/>
    </location>
</feature>
<feature type="sequence variant" evidence="2">
    <original>V</original>
    <variation>A</variation>
    <location>
        <position position="43"/>
    </location>
</feature>
<feature type="sequence variant" evidence="2">
    <original>S</original>
    <variation>Y</variation>
    <location>
        <position position="62"/>
    </location>
</feature>
<feature type="sequence variant" evidence="2">
    <original>G</original>
    <variation>E</variation>
    <location>
        <position position="63"/>
    </location>
</feature>
<feature type="sequence variant" evidence="2">
    <original>E</original>
    <variation>Q</variation>
    <location>
        <position position="64"/>
    </location>
</feature>
<feature type="sequence variant" evidence="2">
    <original>F</original>
    <variation>L</variation>
    <location>
        <position position="75"/>
    </location>
</feature>
<feature type="sequence variant" evidence="2">
    <original>F</original>
    <variation>I</variation>
    <location>
        <position position="119"/>
    </location>
</feature>
<feature type="sequence variant" evidence="2">
    <original>D</original>
    <variation>E</variation>
    <location>
        <position position="140"/>
    </location>
</feature>
<feature type="sequence variant" evidence="2">
    <original>V</original>
    <variation>A</variation>
    <location>
        <position position="143"/>
    </location>
</feature>
<feature type="sequence variant" evidence="2">
    <original>G</original>
    <variation>E</variation>
    <location>
        <position position="165"/>
    </location>
</feature>
<feature type="sequence variant" evidence="2">
    <original>Q</original>
    <variation>P</variation>
    <location>
        <position position="236"/>
    </location>
</feature>
<feature type="sequence conflict" description="In Ref. 3; AAA62580." evidence="5" ref="3">
    <original>R</original>
    <variation>C</variation>
    <location>
        <position position="3"/>
    </location>
</feature>
<dbReference type="EMBL" id="M29345">
    <property type="protein sequence ID" value="AAA27747.1"/>
    <property type="molecule type" value="Genomic_DNA"/>
</dbReference>
<dbReference type="EMBL" id="M29347">
    <property type="protein sequence ID" value="AAA27748.1"/>
    <property type="molecule type" value="mRNA"/>
</dbReference>
<dbReference type="EMBL" id="M29346">
    <property type="protein sequence ID" value="AAA27749.1"/>
    <property type="molecule type" value="mRNA"/>
</dbReference>
<dbReference type="EMBL" id="M29348">
    <property type="protein sequence ID" value="AAA62575.1"/>
    <property type="molecule type" value="mRNA"/>
</dbReference>
<dbReference type="EMBL" id="M29349">
    <property type="protein sequence ID" value="AAA62576.1"/>
    <property type="molecule type" value="mRNA"/>
</dbReference>
<dbReference type="EMBL" id="M25886">
    <property type="protein sequence ID" value="AAA62580.1"/>
    <property type="molecule type" value="mRNA"/>
</dbReference>
<dbReference type="PIR" id="A90833">
    <property type="entry name" value="ONGAPA"/>
</dbReference>
<dbReference type="RefSeq" id="NP_001191670.1">
    <property type="nucleotide sequence ID" value="NM_001204741.1"/>
</dbReference>
<dbReference type="SMR" id="P01362"/>
<dbReference type="GeneID" id="100533533"/>
<dbReference type="CTD" id="100533533"/>
<dbReference type="Proteomes" id="UP000694888">
    <property type="component" value="Unplaced"/>
</dbReference>
<dbReference type="GO" id="GO:0005576">
    <property type="term" value="C:extracellular region"/>
    <property type="evidence" value="ECO:0007669"/>
    <property type="project" value="UniProtKB-SubCell"/>
</dbReference>
<dbReference type="GO" id="GO:0005179">
    <property type="term" value="F:hormone activity"/>
    <property type="evidence" value="ECO:0007669"/>
    <property type="project" value="UniProtKB-KW"/>
</dbReference>
<dbReference type="GO" id="GO:0007218">
    <property type="term" value="P:neuropeptide signaling pathway"/>
    <property type="evidence" value="ECO:0007669"/>
    <property type="project" value="UniProtKB-KW"/>
</dbReference>
<dbReference type="InterPro" id="IPR003424">
    <property type="entry name" value="ELH"/>
</dbReference>
<dbReference type="Pfam" id="PF02323">
    <property type="entry name" value="ELH"/>
    <property type="match status" value="1"/>
</dbReference>
<proteinExistence type="evidence at protein level"/>
<keyword id="KW-0025">Alternative splicing</keyword>
<keyword id="KW-0027">Amidation</keyword>
<keyword id="KW-0165">Cleavage on pair of basic residues</keyword>
<keyword id="KW-0903">Direct protein sequencing</keyword>
<keyword id="KW-0372">Hormone</keyword>
<keyword id="KW-0527">Neuropeptide</keyword>
<keyword id="KW-0964">Secreted</keyword>
<keyword id="KW-0732">Signal</keyword>